<keyword id="KW-0067">ATP-binding</keyword>
<keyword id="KW-0436">Ligase</keyword>
<keyword id="KW-0460">Magnesium</keyword>
<keyword id="KW-0479">Metal-binding</keyword>
<keyword id="KW-0547">Nucleotide-binding</keyword>
<keyword id="KW-0658">Purine biosynthesis</keyword>
<keyword id="KW-1185">Reference proteome</keyword>
<reference key="1">
    <citation type="journal article" date="2003" name="Nature">
        <title>Genome divergence in two Prochlorococcus ecotypes reflects oceanic niche differentiation.</title>
        <authorList>
            <person name="Rocap G."/>
            <person name="Larimer F.W."/>
            <person name="Lamerdin J.E."/>
            <person name="Malfatti S."/>
            <person name="Chain P."/>
            <person name="Ahlgren N.A."/>
            <person name="Arellano A."/>
            <person name="Coleman M."/>
            <person name="Hauser L."/>
            <person name="Hess W.R."/>
            <person name="Johnson Z.I."/>
            <person name="Land M.L."/>
            <person name="Lindell D."/>
            <person name="Post A.F."/>
            <person name="Regala W."/>
            <person name="Shah M."/>
            <person name="Shaw S.L."/>
            <person name="Steglich C."/>
            <person name="Sullivan M.B."/>
            <person name="Ting C.S."/>
            <person name="Tolonen A."/>
            <person name="Webb E.A."/>
            <person name="Zinser E.R."/>
            <person name="Chisholm S.W."/>
        </authorList>
    </citation>
    <scope>NUCLEOTIDE SEQUENCE [LARGE SCALE GENOMIC DNA]</scope>
    <source>
        <strain>MIT 9313</strain>
    </source>
</reference>
<sequence>MTVLPKTLLLLGSGELGKEITIAAQRLGCHVIACDRYSGAPAMQVADQAEVLDMNNSEALTAIIRHHQPDVVIPEIEALAVNALAELENEGITVIPTARATAITMNRDRIRDLASAELALLTPKFAYAGSAEELKHAAEPLGWPVVVKPVMSSSGKGQSVVSNPEGLRQAWQAAMAGSRGNSPRVIVEEFLHFDLEITLLTIRQEDGSTLFCEPIGHEQIGGDYQCSWQPAELSTEQLKQAQSMALTITKNLGGVGLFGVEFFLCGNEVIFSELSPRPHDTGLVTLISQNLSEFELHLRAVLNLPIPTIQTADAAASRVILAKDNLSSISYKGVEKALSEIDTQILLFGKPNARPGRRMGVALAKGKSMEAVRSKADRAAASIQVIKG</sequence>
<proteinExistence type="inferred from homology"/>
<accession>Q7V3S4</accession>
<feature type="chain" id="PRO_0000319203" description="Formate-dependent phosphoribosylglycinamide formyltransferase">
    <location>
        <begin position="1"/>
        <end position="388"/>
    </location>
</feature>
<feature type="domain" description="ATP-grasp" evidence="1">
    <location>
        <begin position="112"/>
        <end position="302"/>
    </location>
</feature>
<feature type="binding site" evidence="1">
    <location>
        <begin position="15"/>
        <end position="16"/>
    </location>
    <ligand>
        <name>N(1)-(5-phospho-beta-D-ribosyl)glycinamide</name>
        <dbReference type="ChEBI" id="CHEBI:143788"/>
    </ligand>
</feature>
<feature type="binding site" evidence="1">
    <location>
        <position position="75"/>
    </location>
    <ligand>
        <name>N(1)-(5-phospho-beta-D-ribosyl)glycinamide</name>
        <dbReference type="ChEBI" id="CHEBI:143788"/>
    </ligand>
</feature>
<feature type="binding site" evidence="1">
    <location>
        <position position="107"/>
    </location>
    <ligand>
        <name>ATP</name>
        <dbReference type="ChEBI" id="CHEBI:30616"/>
    </ligand>
</feature>
<feature type="binding site" evidence="1">
    <location>
        <position position="148"/>
    </location>
    <ligand>
        <name>ATP</name>
        <dbReference type="ChEBI" id="CHEBI:30616"/>
    </ligand>
</feature>
<feature type="binding site" evidence="1">
    <location>
        <begin position="153"/>
        <end position="158"/>
    </location>
    <ligand>
        <name>ATP</name>
        <dbReference type="ChEBI" id="CHEBI:30616"/>
    </ligand>
</feature>
<feature type="binding site" evidence="1">
    <location>
        <begin position="188"/>
        <end position="191"/>
    </location>
    <ligand>
        <name>ATP</name>
        <dbReference type="ChEBI" id="CHEBI:30616"/>
    </ligand>
</feature>
<feature type="binding site" evidence="1">
    <location>
        <position position="196"/>
    </location>
    <ligand>
        <name>ATP</name>
        <dbReference type="ChEBI" id="CHEBI:30616"/>
    </ligand>
</feature>
<feature type="binding site" evidence="1">
    <location>
        <position position="261"/>
    </location>
    <ligand>
        <name>Mg(2+)</name>
        <dbReference type="ChEBI" id="CHEBI:18420"/>
    </ligand>
</feature>
<feature type="binding site" evidence="1">
    <location>
        <position position="273"/>
    </location>
    <ligand>
        <name>Mg(2+)</name>
        <dbReference type="ChEBI" id="CHEBI:18420"/>
    </ligand>
</feature>
<feature type="binding site" evidence="1">
    <location>
        <position position="280"/>
    </location>
    <ligand>
        <name>N(1)-(5-phospho-beta-D-ribosyl)glycinamide</name>
        <dbReference type="ChEBI" id="CHEBI:143788"/>
    </ligand>
</feature>
<feature type="binding site" evidence="1">
    <location>
        <position position="350"/>
    </location>
    <ligand>
        <name>N(1)-(5-phospho-beta-D-ribosyl)glycinamide</name>
        <dbReference type="ChEBI" id="CHEBI:143788"/>
    </ligand>
</feature>
<feature type="binding site" evidence="1">
    <location>
        <begin position="357"/>
        <end position="358"/>
    </location>
    <ligand>
        <name>N(1)-(5-phospho-beta-D-ribosyl)glycinamide</name>
        <dbReference type="ChEBI" id="CHEBI:143788"/>
    </ligand>
</feature>
<name>PURT_PROMM</name>
<evidence type="ECO:0000255" key="1">
    <source>
        <dbReference type="HAMAP-Rule" id="MF_01643"/>
    </source>
</evidence>
<gene>
    <name evidence="1" type="primary">purT</name>
    <name type="ordered locus">PMT_2267</name>
</gene>
<organism>
    <name type="scientific">Prochlorococcus marinus (strain MIT 9313)</name>
    <dbReference type="NCBI Taxonomy" id="74547"/>
    <lineage>
        <taxon>Bacteria</taxon>
        <taxon>Bacillati</taxon>
        <taxon>Cyanobacteriota</taxon>
        <taxon>Cyanophyceae</taxon>
        <taxon>Synechococcales</taxon>
        <taxon>Prochlorococcaceae</taxon>
        <taxon>Prochlorococcus</taxon>
    </lineage>
</organism>
<protein>
    <recommendedName>
        <fullName evidence="1">Formate-dependent phosphoribosylglycinamide formyltransferase</fullName>
        <ecNumber evidence="1">6.3.1.21</ecNumber>
    </recommendedName>
    <alternativeName>
        <fullName evidence="1">5'-phosphoribosylglycinamide transformylase 2</fullName>
    </alternativeName>
    <alternativeName>
        <fullName evidence="1">Formate-dependent GAR transformylase</fullName>
    </alternativeName>
    <alternativeName>
        <fullName evidence="1">GAR transformylase 2</fullName>
        <shortName evidence="1">GART 2</shortName>
    </alternativeName>
    <alternativeName>
        <fullName evidence="1">Non-folate glycinamide ribonucleotide transformylase</fullName>
    </alternativeName>
    <alternativeName>
        <fullName evidence="1">Phosphoribosylglycinamide formyltransferase 2</fullName>
    </alternativeName>
</protein>
<comment type="function">
    <text evidence="1">Involved in the de novo purine biosynthesis. Catalyzes the transfer of formate to 5-phospho-ribosyl-glycinamide (GAR), producing 5-phospho-ribosyl-N-formylglycinamide (FGAR). Formate is provided by PurU via hydrolysis of 10-formyl-tetrahydrofolate.</text>
</comment>
<comment type="catalytic activity">
    <reaction evidence="1">
        <text>N(1)-(5-phospho-beta-D-ribosyl)glycinamide + formate + ATP = N(2)-formyl-N(1)-(5-phospho-beta-D-ribosyl)glycinamide + ADP + phosphate + H(+)</text>
        <dbReference type="Rhea" id="RHEA:24829"/>
        <dbReference type="ChEBI" id="CHEBI:15378"/>
        <dbReference type="ChEBI" id="CHEBI:15740"/>
        <dbReference type="ChEBI" id="CHEBI:30616"/>
        <dbReference type="ChEBI" id="CHEBI:43474"/>
        <dbReference type="ChEBI" id="CHEBI:143788"/>
        <dbReference type="ChEBI" id="CHEBI:147286"/>
        <dbReference type="ChEBI" id="CHEBI:456216"/>
        <dbReference type="EC" id="6.3.1.21"/>
    </reaction>
    <physiologicalReaction direction="left-to-right" evidence="1">
        <dbReference type="Rhea" id="RHEA:24830"/>
    </physiologicalReaction>
</comment>
<comment type="pathway">
    <text evidence="1">Purine metabolism; IMP biosynthesis via de novo pathway; N(2)-formyl-N(1)-(5-phospho-D-ribosyl)glycinamide from N(1)-(5-phospho-D-ribosyl)glycinamide (formate route): step 1/1.</text>
</comment>
<comment type="subunit">
    <text evidence="1">Homodimer.</text>
</comment>
<comment type="similarity">
    <text evidence="1">Belongs to the PurK/PurT family.</text>
</comment>
<dbReference type="EC" id="6.3.1.21" evidence="1"/>
<dbReference type="EMBL" id="BX548175">
    <property type="protein sequence ID" value="CAE22441.1"/>
    <property type="molecule type" value="Genomic_DNA"/>
</dbReference>
<dbReference type="RefSeq" id="WP_011131631.1">
    <property type="nucleotide sequence ID" value="NC_005071.1"/>
</dbReference>
<dbReference type="SMR" id="Q7V3S4"/>
<dbReference type="KEGG" id="pmt:PMT_2267"/>
<dbReference type="eggNOG" id="COG0027">
    <property type="taxonomic scope" value="Bacteria"/>
</dbReference>
<dbReference type="HOGENOM" id="CLU_011534_1_3_3"/>
<dbReference type="OrthoDB" id="9804625at2"/>
<dbReference type="UniPathway" id="UPA00074">
    <property type="reaction ID" value="UER00127"/>
</dbReference>
<dbReference type="Proteomes" id="UP000001423">
    <property type="component" value="Chromosome"/>
</dbReference>
<dbReference type="GO" id="GO:0005829">
    <property type="term" value="C:cytosol"/>
    <property type="evidence" value="ECO:0007669"/>
    <property type="project" value="TreeGrafter"/>
</dbReference>
<dbReference type="GO" id="GO:0005524">
    <property type="term" value="F:ATP binding"/>
    <property type="evidence" value="ECO:0007669"/>
    <property type="project" value="UniProtKB-UniRule"/>
</dbReference>
<dbReference type="GO" id="GO:0000287">
    <property type="term" value="F:magnesium ion binding"/>
    <property type="evidence" value="ECO:0007669"/>
    <property type="project" value="InterPro"/>
</dbReference>
<dbReference type="GO" id="GO:0043815">
    <property type="term" value="F:phosphoribosylglycinamide formyltransferase 2 activity"/>
    <property type="evidence" value="ECO:0007669"/>
    <property type="project" value="UniProtKB-UniRule"/>
</dbReference>
<dbReference type="GO" id="GO:0004644">
    <property type="term" value="F:phosphoribosylglycinamide formyltransferase activity"/>
    <property type="evidence" value="ECO:0007669"/>
    <property type="project" value="InterPro"/>
</dbReference>
<dbReference type="GO" id="GO:0006189">
    <property type="term" value="P:'de novo' IMP biosynthetic process"/>
    <property type="evidence" value="ECO:0007669"/>
    <property type="project" value="UniProtKB-UniRule"/>
</dbReference>
<dbReference type="Gene3D" id="3.40.50.20">
    <property type="match status" value="1"/>
</dbReference>
<dbReference type="Gene3D" id="3.30.1490.20">
    <property type="entry name" value="ATP-grasp fold, A domain"/>
    <property type="match status" value="1"/>
</dbReference>
<dbReference type="Gene3D" id="3.30.470.20">
    <property type="entry name" value="ATP-grasp fold, B domain"/>
    <property type="match status" value="1"/>
</dbReference>
<dbReference type="HAMAP" id="MF_01643">
    <property type="entry name" value="PurT"/>
    <property type="match status" value="1"/>
</dbReference>
<dbReference type="InterPro" id="IPR011761">
    <property type="entry name" value="ATP-grasp"/>
</dbReference>
<dbReference type="InterPro" id="IPR003135">
    <property type="entry name" value="ATP-grasp_carboxylate-amine"/>
</dbReference>
<dbReference type="InterPro" id="IPR013815">
    <property type="entry name" value="ATP_grasp_subdomain_1"/>
</dbReference>
<dbReference type="InterPro" id="IPR016185">
    <property type="entry name" value="PreATP-grasp_dom_sf"/>
</dbReference>
<dbReference type="InterPro" id="IPR005862">
    <property type="entry name" value="PurT"/>
</dbReference>
<dbReference type="InterPro" id="IPR054350">
    <property type="entry name" value="PurT/PurK_preATP-grasp"/>
</dbReference>
<dbReference type="InterPro" id="IPR048740">
    <property type="entry name" value="PurT_C"/>
</dbReference>
<dbReference type="InterPro" id="IPR011054">
    <property type="entry name" value="Rudment_hybrid_motif"/>
</dbReference>
<dbReference type="NCBIfam" id="NF006766">
    <property type="entry name" value="PRK09288.1"/>
    <property type="match status" value="1"/>
</dbReference>
<dbReference type="NCBIfam" id="TIGR01142">
    <property type="entry name" value="purT"/>
    <property type="match status" value="1"/>
</dbReference>
<dbReference type="PANTHER" id="PTHR43055">
    <property type="entry name" value="FORMATE-DEPENDENT PHOSPHORIBOSYLGLYCINAMIDE FORMYLTRANSFERASE"/>
    <property type="match status" value="1"/>
</dbReference>
<dbReference type="PANTHER" id="PTHR43055:SF1">
    <property type="entry name" value="FORMATE-DEPENDENT PHOSPHORIBOSYLGLYCINAMIDE FORMYLTRANSFERASE"/>
    <property type="match status" value="1"/>
</dbReference>
<dbReference type="Pfam" id="PF02222">
    <property type="entry name" value="ATP-grasp"/>
    <property type="match status" value="1"/>
</dbReference>
<dbReference type="Pfam" id="PF21244">
    <property type="entry name" value="PurT_C"/>
    <property type="match status" value="1"/>
</dbReference>
<dbReference type="Pfam" id="PF22660">
    <property type="entry name" value="RS_preATP-grasp-like"/>
    <property type="match status" value="1"/>
</dbReference>
<dbReference type="SUPFAM" id="SSF56059">
    <property type="entry name" value="Glutathione synthetase ATP-binding domain-like"/>
    <property type="match status" value="1"/>
</dbReference>
<dbReference type="SUPFAM" id="SSF52440">
    <property type="entry name" value="PreATP-grasp domain"/>
    <property type="match status" value="1"/>
</dbReference>
<dbReference type="SUPFAM" id="SSF51246">
    <property type="entry name" value="Rudiment single hybrid motif"/>
    <property type="match status" value="1"/>
</dbReference>
<dbReference type="PROSITE" id="PS50975">
    <property type="entry name" value="ATP_GRASP"/>
    <property type="match status" value="1"/>
</dbReference>